<evidence type="ECO:0000250" key="1"/>
<evidence type="ECO:0000255" key="2"/>
<evidence type="ECO:0000255" key="3">
    <source>
        <dbReference type="PROSITE-ProRule" id="PRU00114"/>
    </source>
</evidence>
<evidence type="ECO:0000256" key="4">
    <source>
        <dbReference type="SAM" id="MobiDB-lite"/>
    </source>
</evidence>
<evidence type="ECO:0000269" key="5">
    <source>
    </source>
</evidence>
<evidence type="ECO:0000269" key="6">
    <source>
    </source>
</evidence>
<evidence type="ECO:0000269" key="7">
    <source>
    </source>
</evidence>
<evidence type="ECO:0000305" key="8"/>
<reference key="1">
    <citation type="journal article" date="2004" name="J. Biol. Chem.">
        <title>CLMP, a novel member of the CTX family and a new component of epithelial tight junctions.</title>
        <authorList>
            <person name="Raschperger E."/>
            <person name="Engstrom U."/>
            <person name="Pettersson R.F."/>
            <person name="Fuxe J."/>
        </authorList>
    </citation>
    <scope>NUCLEOTIDE SEQUENCE [MRNA]</scope>
    <scope>FUNCTION</scope>
    <scope>SUBCELLULAR LOCATION</scope>
    <scope>TISSUE SPECIFICITY</scope>
    <source>
        <strain>Swiss Webster / NIH</strain>
    </source>
</reference>
<reference key="2">
    <citation type="journal article" date="2005" name="Biochem. J.">
        <title>Identification of adipocyte adhesion molecule (ACAM), a novel CTX gene family, implicated in adipocyte maturation and development of obesity.</title>
        <authorList>
            <person name="Eguchi J."/>
            <person name="Wada J."/>
            <person name="Hida K."/>
            <person name="Zhang H."/>
            <person name="Matsuoka T."/>
            <person name="Baba M."/>
            <person name="Hashimoto I."/>
            <person name="Shikata K."/>
            <person name="Ogawa N."/>
            <person name="Makino H."/>
        </authorList>
    </citation>
    <scope>NUCLEOTIDE SEQUENCE [MRNA]</scope>
    <scope>FUNCTION</scope>
    <scope>INDUCTION</scope>
    <scope>TISSUE SPECIFICITY</scope>
    <source>
        <strain>Swiss Webster</strain>
    </source>
</reference>
<reference key="3">
    <citation type="submission" date="2000-03" db="EMBL/GenBank/DDBJ databases">
        <title>Adipocyte-specific protein 5, a novel protein upregulated during adipocyte differentiation.</title>
        <authorList>
            <person name="Tsuruga H."/>
        </authorList>
    </citation>
    <scope>NUCLEOTIDE SEQUENCE [MRNA]</scope>
</reference>
<reference key="4">
    <citation type="journal article" date="2005" name="Science">
        <title>The transcriptional landscape of the mammalian genome.</title>
        <authorList>
            <person name="Carninci P."/>
            <person name="Kasukawa T."/>
            <person name="Katayama S."/>
            <person name="Gough J."/>
            <person name="Frith M.C."/>
            <person name="Maeda N."/>
            <person name="Oyama R."/>
            <person name="Ravasi T."/>
            <person name="Lenhard B."/>
            <person name="Wells C."/>
            <person name="Kodzius R."/>
            <person name="Shimokawa K."/>
            <person name="Bajic V.B."/>
            <person name="Brenner S.E."/>
            <person name="Batalov S."/>
            <person name="Forrest A.R."/>
            <person name="Zavolan M."/>
            <person name="Davis M.J."/>
            <person name="Wilming L.G."/>
            <person name="Aidinis V."/>
            <person name="Allen J.E."/>
            <person name="Ambesi-Impiombato A."/>
            <person name="Apweiler R."/>
            <person name="Aturaliya R.N."/>
            <person name="Bailey T.L."/>
            <person name="Bansal M."/>
            <person name="Baxter L."/>
            <person name="Beisel K.W."/>
            <person name="Bersano T."/>
            <person name="Bono H."/>
            <person name="Chalk A.M."/>
            <person name="Chiu K.P."/>
            <person name="Choudhary V."/>
            <person name="Christoffels A."/>
            <person name="Clutterbuck D.R."/>
            <person name="Crowe M.L."/>
            <person name="Dalla E."/>
            <person name="Dalrymple B.P."/>
            <person name="de Bono B."/>
            <person name="Della Gatta G."/>
            <person name="di Bernardo D."/>
            <person name="Down T."/>
            <person name="Engstrom P."/>
            <person name="Fagiolini M."/>
            <person name="Faulkner G."/>
            <person name="Fletcher C.F."/>
            <person name="Fukushima T."/>
            <person name="Furuno M."/>
            <person name="Futaki S."/>
            <person name="Gariboldi M."/>
            <person name="Georgii-Hemming P."/>
            <person name="Gingeras T.R."/>
            <person name="Gojobori T."/>
            <person name="Green R.E."/>
            <person name="Gustincich S."/>
            <person name="Harbers M."/>
            <person name="Hayashi Y."/>
            <person name="Hensch T.K."/>
            <person name="Hirokawa N."/>
            <person name="Hill D."/>
            <person name="Huminiecki L."/>
            <person name="Iacono M."/>
            <person name="Ikeo K."/>
            <person name="Iwama A."/>
            <person name="Ishikawa T."/>
            <person name="Jakt M."/>
            <person name="Kanapin A."/>
            <person name="Katoh M."/>
            <person name="Kawasawa Y."/>
            <person name="Kelso J."/>
            <person name="Kitamura H."/>
            <person name="Kitano H."/>
            <person name="Kollias G."/>
            <person name="Krishnan S.P."/>
            <person name="Kruger A."/>
            <person name="Kummerfeld S.K."/>
            <person name="Kurochkin I.V."/>
            <person name="Lareau L.F."/>
            <person name="Lazarevic D."/>
            <person name="Lipovich L."/>
            <person name="Liu J."/>
            <person name="Liuni S."/>
            <person name="McWilliam S."/>
            <person name="Madan Babu M."/>
            <person name="Madera M."/>
            <person name="Marchionni L."/>
            <person name="Matsuda H."/>
            <person name="Matsuzawa S."/>
            <person name="Miki H."/>
            <person name="Mignone F."/>
            <person name="Miyake S."/>
            <person name="Morris K."/>
            <person name="Mottagui-Tabar S."/>
            <person name="Mulder N."/>
            <person name="Nakano N."/>
            <person name="Nakauchi H."/>
            <person name="Ng P."/>
            <person name="Nilsson R."/>
            <person name="Nishiguchi S."/>
            <person name="Nishikawa S."/>
            <person name="Nori F."/>
            <person name="Ohara O."/>
            <person name="Okazaki Y."/>
            <person name="Orlando V."/>
            <person name="Pang K.C."/>
            <person name="Pavan W.J."/>
            <person name="Pavesi G."/>
            <person name="Pesole G."/>
            <person name="Petrovsky N."/>
            <person name="Piazza S."/>
            <person name="Reed J."/>
            <person name="Reid J.F."/>
            <person name="Ring B.Z."/>
            <person name="Ringwald M."/>
            <person name="Rost B."/>
            <person name="Ruan Y."/>
            <person name="Salzberg S.L."/>
            <person name="Sandelin A."/>
            <person name="Schneider C."/>
            <person name="Schoenbach C."/>
            <person name="Sekiguchi K."/>
            <person name="Semple C.A."/>
            <person name="Seno S."/>
            <person name="Sessa L."/>
            <person name="Sheng Y."/>
            <person name="Shibata Y."/>
            <person name="Shimada H."/>
            <person name="Shimada K."/>
            <person name="Silva D."/>
            <person name="Sinclair B."/>
            <person name="Sperling S."/>
            <person name="Stupka E."/>
            <person name="Sugiura K."/>
            <person name="Sultana R."/>
            <person name="Takenaka Y."/>
            <person name="Taki K."/>
            <person name="Tammoja K."/>
            <person name="Tan S.L."/>
            <person name="Tang S."/>
            <person name="Taylor M.S."/>
            <person name="Tegner J."/>
            <person name="Teichmann S.A."/>
            <person name="Ueda H.R."/>
            <person name="van Nimwegen E."/>
            <person name="Verardo R."/>
            <person name="Wei C.L."/>
            <person name="Yagi K."/>
            <person name="Yamanishi H."/>
            <person name="Zabarovsky E."/>
            <person name="Zhu S."/>
            <person name="Zimmer A."/>
            <person name="Hide W."/>
            <person name="Bult C."/>
            <person name="Grimmond S.M."/>
            <person name="Teasdale R.D."/>
            <person name="Liu E.T."/>
            <person name="Brusic V."/>
            <person name="Quackenbush J."/>
            <person name="Wahlestedt C."/>
            <person name="Mattick J.S."/>
            <person name="Hume D.A."/>
            <person name="Kai C."/>
            <person name="Sasaki D."/>
            <person name="Tomaru Y."/>
            <person name="Fukuda S."/>
            <person name="Kanamori-Katayama M."/>
            <person name="Suzuki M."/>
            <person name="Aoki J."/>
            <person name="Arakawa T."/>
            <person name="Iida J."/>
            <person name="Imamura K."/>
            <person name="Itoh M."/>
            <person name="Kato T."/>
            <person name="Kawaji H."/>
            <person name="Kawagashira N."/>
            <person name="Kawashima T."/>
            <person name="Kojima M."/>
            <person name="Kondo S."/>
            <person name="Konno H."/>
            <person name="Nakano K."/>
            <person name="Ninomiya N."/>
            <person name="Nishio T."/>
            <person name="Okada M."/>
            <person name="Plessy C."/>
            <person name="Shibata K."/>
            <person name="Shiraki T."/>
            <person name="Suzuki S."/>
            <person name="Tagami M."/>
            <person name="Waki K."/>
            <person name="Watahiki A."/>
            <person name="Okamura-Oho Y."/>
            <person name="Suzuki H."/>
            <person name="Kawai J."/>
            <person name="Hayashizaki Y."/>
        </authorList>
    </citation>
    <scope>NUCLEOTIDE SEQUENCE [LARGE SCALE MRNA]</scope>
    <source>
        <strain>C57BL/6J</strain>
        <tissue>Cecum</tissue>
    </source>
</reference>
<reference key="5">
    <citation type="journal article" date="2004" name="Genome Res.">
        <title>The status, quality, and expansion of the NIH full-length cDNA project: the Mammalian Gene Collection (MGC).</title>
        <authorList>
            <consortium name="The MGC Project Team"/>
        </authorList>
    </citation>
    <scope>NUCLEOTIDE SEQUENCE [LARGE SCALE MRNA]</scope>
    <source>
        <strain>FVB/N</strain>
        <tissue>Mammary tumor</tissue>
    </source>
</reference>
<reference key="6">
    <citation type="journal article" date="2009" name="Mol. Cell. Proteomics">
        <title>The mouse C2C12 myoblast cell surface N-linked glycoproteome: identification, glycosite occupancy, and membrane orientation.</title>
        <authorList>
            <person name="Gundry R.L."/>
            <person name="Raginski K."/>
            <person name="Tarasova Y."/>
            <person name="Tchernyshyov I."/>
            <person name="Bausch-Fluck D."/>
            <person name="Elliott S.T."/>
            <person name="Boheler K.R."/>
            <person name="Van Eyk J.E."/>
            <person name="Wollscheid B."/>
        </authorList>
    </citation>
    <scope>GLYCOSYLATION [LARGE SCALE ANALYSIS] AT ASN-73</scope>
    <source>
        <tissue>Myoblast</tissue>
    </source>
</reference>
<comment type="function">
    <text evidence="1 5 6">May be involved in the cell-cell adhesion. May play a role in adipocyte differentiation and development of obesity. Is required for normal small intestine development (By similarity).</text>
</comment>
<comment type="subcellular location">
    <subcellularLocation>
        <location evidence="5">Cell junction</location>
        <location evidence="5">Tight junction</location>
    </subcellularLocation>
    <subcellularLocation>
        <location evidence="8">Cell membrane</location>
        <topology evidence="8">Single-pass type I membrane protein</topology>
    </subcellularLocation>
</comment>
<comment type="tissue specificity">
    <text evidence="5 6">Predominantly expressed in epithelial cells within different tissues and in the white adipose tissue. Expressed at high levels in the heart and brain, at intermediate levels in the lung, skeletal muscle, kidney and testis and at low levels in the liver and spleen.</text>
</comment>
<comment type="induction">
    <text evidence="6">Up-regulated in mature adipocytes and adipocyte tissue of obese animals.</text>
</comment>
<gene>
    <name type="primary">Clmp</name>
    <name type="synonym">Acam</name>
    <name type="synonym">Asam</name>
    <name type="synonym">Asp5</name>
</gene>
<proteinExistence type="evidence at protein level"/>
<protein>
    <recommendedName>
        <fullName>CXADR-like membrane protein</fullName>
    </recommendedName>
    <alternativeName>
        <fullName>Adipocyte adhesion molecule</fullName>
    </alternativeName>
    <alternativeName>
        <fullName>Adipocyte-specific protein 5</fullName>
    </alternativeName>
    <alternativeName>
        <fullName>Coxsackie- and adenovirus receptor-like membrane protein</fullName>
        <shortName>CAR-like membrane protein</shortName>
    </alternativeName>
</protein>
<organism>
    <name type="scientific">Mus musculus</name>
    <name type="common">Mouse</name>
    <dbReference type="NCBI Taxonomy" id="10090"/>
    <lineage>
        <taxon>Eukaryota</taxon>
        <taxon>Metazoa</taxon>
        <taxon>Chordata</taxon>
        <taxon>Craniata</taxon>
        <taxon>Vertebrata</taxon>
        <taxon>Euteleostomi</taxon>
        <taxon>Mammalia</taxon>
        <taxon>Eutheria</taxon>
        <taxon>Euarchontoglires</taxon>
        <taxon>Glires</taxon>
        <taxon>Rodentia</taxon>
        <taxon>Myomorpha</taxon>
        <taxon>Muroidea</taxon>
        <taxon>Muridae</taxon>
        <taxon>Murinae</taxon>
        <taxon>Mus</taxon>
        <taxon>Mus</taxon>
    </lineage>
</organism>
<name>CLMP_MOUSE</name>
<keyword id="KW-0965">Cell junction</keyword>
<keyword id="KW-1003">Cell membrane</keyword>
<keyword id="KW-1015">Disulfide bond</keyword>
<keyword id="KW-0325">Glycoprotein</keyword>
<keyword id="KW-0393">Immunoglobulin domain</keyword>
<keyword id="KW-0472">Membrane</keyword>
<keyword id="KW-1185">Reference proteome</keyword>
<keyword id="KW-0677">Repeat</keyword>
<keyword id="KW-0732">Signal</keyword>
<keyword id="KW-0796">Tight junction</keyword>
<keyword id="KW-0812">Transmembrane</keyword>
<keyword id="KW-1133">Transmembrane helix</keyword>
<sequence>MSLFFLWLVSYYVGTLGTHTEIKRVAEEKVTLPCHHQLGLPEKDTLDIEWLLTDNEGNQKVVITYSSRHVYNNLTEEQKGRVAFASNFLAGDASLQIEPLKPSDEGRYTCKVKNSGRYVWSHVILKVLVRPSKPKCELEGEPTEGSDLTLQCESASGTKPIVYYWQRIREKEGEDEHLPPKSRIDYNNPGRVLLQNLTMASSGLYQCTAGNEAGKESCVVRVTVQYVQSIGMVAGAVTGIVAGALLIFLLIWLLIRRKSKDRYEEEDRPNEIREDAEAPRARLVKPSSSSSGSRSSRSGSSSTRSTGNSASRSQRTLSSEAAPQQPGLAPQAYSLIGPEVRGSEPKKVHHTTLTKAETTLSTTPSQSKAFQTV</sequence>
<dbReference type="EMBL" id="AY259213">
    <property type="protein sequence ID" value="AAP15240.1"/>
    <property type="molecule type" value="mRNA"/>
</dbReference>
<dbReference type="EMBL" id="AY326421">
    <property type="protein sequence ID" value="AAP88385.1"/>
    <property type="molecule type" value="mRNA"/>
</dbReference>
<dbReference type="EMBL" id="AB040490">
    <property type="protein sequence ID" value="BAB68503.1"/>
    <property type="molecule type" value="mRNA"/>
</dbReference>
<dbReference type="EMBL" id="AK033723">
    <property type="protein sequence ID" value="BAC28446.1"/>
    <property type="molecule type" value="mRNA"/>
</dbReference>
<dbReference type="EMBL" id="BC026447">
    <property type="protein sequence ID" value="AAH26447.1"/>
    <property type="molecule type" value="mRNA"/>
</dbReference>
<dbReference type="CCDS" id="CCDS23082.1"/>
<dbReference type="RefSeq" id="NP_598494.2">
    <property type="nucleotide sequence ID" value="NM_133733.4"/>
</dbReference>
<dbReference type="SMR" id="Q8R373"/>
<dbReference type="BioGRID" id="214785">
    <property type="interactions" value="1"/>
</dbReference>
<dbReference type="FunCoup" id="Q8R373">
    <property type="interactions" value="15"/>
</dbReference>
<dbReference type="STRING" id="10090.ENSMUSP00000034522"/>
<dbReference type="GlyCosmos" id="Q8R373">
    <property type="glycosylation" value="2 sites, No reported glycans"/>
</dbReference>
<dbReference type="GlyGen" id="Q8R373">
    <property type="glycosylation" value="2 sites, 2 N-linked glycans (2 sites)"/>
</dbReference>
<dbReference type="iPTMnet" id="Q8R373"/>
<dbReference type="PhosphoSitePlus" id="Q8R373"/>
<dbReference type="PaxDb" id="10090-ENSMUSP00000034522"/>
<dbReference type="ProteomicsDB" id="279113"/>
<dbReference type="Pumba" id="Q8R373"/>
<dbReference type="Antibodypedia" id="1118">
    <property type="antibodies" value="225 antibodies from 29 providers"/>
</dbReference>
<dbReference type="DNASU" id="71566"/>
<dbReference type="Ensembl" id="ENSMUST00000034522.8">
    <property type="protein sequence ID" value="ENSMUSP00000034522.8"/>
    <property type="gene ID" value="ENSMUSG00000032024.11"/>
</dbReference>
<dbReference type="GeneID" id="71566"/>
<dbReference type="KEGG" id="mmu:71566"/>
<dbReference type="UCSC" id="uc009ozt.1">
    <property type="organism name" value="mouse"/>
</dbReference>
<dbReference type="AGR" id="MGI:1918816"/>
<dbReference type="CTD" id="79827"/>
<dbReference type="MGI" id="MGI:1918816">
    <property type="gene designation" value="Clmp"/>
</dbReference>
<dbReference type="VEuPathDB" id="HostDB:ENSMUSG00000032024"/>
<dbReference type="eggNOG" id="KOG3866">
    <property type="taxonomic scope" value="Eukaryota"/>
</dbReference>
<dbReference type="GeneTree" id="ENSGT00940000161031"/>
<dbReference type="HOGENOM" id="CLU_040549_0_1_1"/>
<dbReference type="InParanoid" id="Q8R373"/>
<dbReference type="OMA" id="RYSCKVK"/>
<dbReference type="OrthoDB" id="9446970at2759"/>
<dbReference type="PhylomeDB" id="Q8R373"/>
<dbReference type="TreeFam" id="TF330875"/>
<dbReference type="BioGRID-ORCS" id="71566">
    <property type="hits" value="2 hits in 76 CRISPR screens"/>
</dbReference>
<dbReference type="ChiTaRS" id="Clmp">
    <property type="organism name" value="mouse"/>
</dbReference>
<dbReference type="PRO" id="PR:Q8R373"/>
<dbReference type="Proteomes" id="UP000000589">
    <property type="component" value="Chromosome 9"/>
</dbReference>
<dbReference type="RNAct" id="Q8R373">
    <property type="molecule type" value="protein"/>
</dbReference>
<dbReference type="Bgee" id="ENSMUSG00000032024">
    <property type="expression patterns" value="Expressed in undifferentiated genital tubercle and 243 other cell types or tissues"/>
</dbReference>
<dbReference type="GO" id="GO:0005923">
    <property type="term" value="C:bicellular tight junction"/>
    <property type="evidence" value="ECO:0007669"/>
    <property type="project" value="UniProtKB-SubCell"/>
</dbReference>
<dbReference type="GO" id="GO:0005881">
    <property type="term" value="C:cytoplasmic microtubule"/>
    <property type="evidence" value="ECO:0000250"/>
    <property type="project" value="UniProtKB"/>
</dbReference>
<dbReference type="GO" id="GO:0045211">
    <property type="term" value="C:postsynaptic membrane"/>
    <property type="evidence" value="ECO:0000314"/>
    <property type="project" value="SynGO"/>
</dbReference>
<dbReference type="GO" id="GO:0048565">
    <property type="term" value="P:digestive tract development"/>
    <property type="evidence" value="ECO:0007669"/>
    <property type="project" value="Ensembl"/>
</dbReference>
<dbReference type="GO" id="GO:0099170">
    <property type="term" value="P:postsynaptic modulation of chemical synaptic transmission"/>
    <property type="evidence" value="ECO:0000314"/>
    <property type="project" value="SynGO"/>
</dbReference>
<dbReference type="CDD" id="cd00096">
    <property type="entry name" value="Ig"/>
    <property type="match status" value="1"/>
</dbReference>
<dbReference type="CDD" id="cd20960">
    <property type="entry name" value="IgV_CAR_like"/>
    <property type="match status" value="1"/>
</dbReference>
<dbReference type="FunFam" id="2.60.40.10:FF:000764">
    <property type="entry name" value="CXADR like membrane protein"/>
    <property type="match status" value="1"/>
</dbReference>
<dbReference type="FunFam" id="2.60.40.10:FF:000095">
    <property type="entry name" value="immunoglobulin superfamily member 11 isoform X1"/>
    <property type="match status" value="1"/>
</dbReference>
<dbReference type="Gene3D" id="2.60.40.10">
    <property type="entry name" value="Immunoglobulins"/>
    <property type="match status" value="2"/>
</dbReference>
<dbReference type="InterPro" id="IPR042454">
    <property type="entry name" value="CLMP"/>
</dbReference>
<dbReference type="InterPro" id="IPR007110">
    <property type="entry name" value="Ig-like_dom"/>
</dbReference>
<dbReference type="InterPro" id="IPR036179">
    <property type="entry name" value="Ig-like_dom_sf"/>
</dbReference>
<dbReference type="InterPro" id="IPR013783">
    <property type="entry name" value="Ig-like_fold"/>
</dbReference>
<dbReference type="InterPro" id="IPR003599">
    <property type="entry name" value="Ig_sub"/>
</dbReference>
<dbReference type="InterPro" id="IPR003598">
    <property type="entry name" value="Ig_sub2"/>
</dbReference>
<dbReference type="InterPro" id="IPR013106">
    <property type="entry name" value="Ig_V-set"/>
</dbReference>
<dbReference type="PANTHER" id="PTHR44783">
    <property type="entry name" value="CXADR-LIKE MEMBRANE PROTEIN"/>
    <property type="match status" value="1"/>
</dbReference>
<dbReference type="PANTHER" id="PTHR44783:SF1">
    <property type="entry name" value="CXADR-LIKE MEMBRANE PROTEIN"/>
    <property type="match status" value="1"/>
</dbReference>
<dbReference type="Pfam" id="PF13927">
    <property type="entry name" value="Ig_3"/>
    <property type="match status" value="1"/>
</dbReference>
<dbReference type="Pfam" id="PF07686">
    <property type="entry name" value="V-set"/>
    <property type="match status" value="1"/>
</dbReference>
<dbReference type="SMART" id="SM00409">
    <property type="entry name" value="IG"/>
    <property type="match status" value="2"/>
</dbReference>
<dbReference type="SMART" id="SM00408">
    <property type="entry name" value="IGc2"/>
    <property type="match status" value="2"/>
</dbReference>
<dbReference type="SMART" id="SM00406">
    <property type="entry name" value="IGv"/>
    <property type="match status" value="1"/>
</dbReference>
<dbReference type="SUPFAM" id="SSF48726">
    <property type="entry name" value="Immunoglobulin"/>
    <property type="match status" value="2"/>
</dbReference>
<dbReference type="PROSITE" id="PS50835">
    <property type="entry name" value="IG_LIKE"/>
    <property type="match status" value="2"/>
</dbReference>
<accession>Q8R373</accession>
<accession>Q920S5</accession>
<feature type="signal peptide" evidence="2">
    <location>
        <begin position="1"/>
        <end position="17"/>
    </location>
</feature>
<feature type="chain" id="PRO_0000293027" description="CXADR-like membrane protein">
    <location>
        <begin position="18"/>
        <end position="373"/>
    </location>
</feature>
<feature type="topological domain" description="Extracellular" evidence="2">
    <location>
        <begin position="18"/>
        <end position="234"/>
    </location>
</feature>
<feature type="transmembrane region" description="Helical" evidence="2">
    <location>
        <begin position="235"/>
        <end position="255"/>
    </location>
</feature>
<feature type="topological domain" description="Cytoplasmic" evidence="2">
    <location>
        <begin position="256"/>
        <end position="373"/>
    </location>
</feature>
<feature type="domain" description="Ig-like C2-type 1">
    <location>
        <begin position="18"/>
        <end position="126"/>
    </location>
</feature>
<feature type="domain" description="Ig-like C2-type 2">
    <location>
        <begin position="134"/>
        <end position="223"/>
    </location>
</feature>
<feature type="region of interest" description="Disordered" evidence="4">
    <location>
        <begin position="263"/>
        <end position="373"/>
    </location>
</feature>
<feature type="compositionally biased region" description="Basic and acidic residues" evidence="4">
    <location>
        <begin position="263"/>
        <end position="280"/>
    </location>
</feature>
<feature type="compositionally biased region" description="Low complexity" evidence="4">
    <location>
        <begin position="287"/>
        <end position="313"/>
    </location>
</feature>
<feature type="compositionally biased region" description="Low complexity" evidence="4">
    <location>
        <begin position="321"/>
        <end position="332"/>
    </location>
</feature>
<feature type="compositionally biased region" description="Low complexity" evidence="4">
    <location>
        <begin position="353"/>
        <end position="363"/>
    </location>
</feature>
<feature type="compositionally biased region" description="Polar residues" evidence="4">
    <location>
        <begin position="364"/>
        <end position="373"/>
    </location>
</feature>
<feature type="glycosylation site" description="N-linked (GlcNAc...) asparagine" evidence="7">
    <location>
        <position position="73"/>
    </location>
</feature>
<feature type="glycosylation site" description="N-linked (GlcNAc...) asparagine" evidence="2">
    <location>
        <position position="196"/>
    </location>
</feature>
<feature type="disulfide bond" evidence="3">
    <location>
        <begin position="34"/>
        <end position="110"/>
    </location>
</feature>
<feature type="disulfide bond" evidence="3">
    <location>
        <begin position="152"/>
        <end position="207"/>
    </location>
</feature>
<feature type="sequence conflict" description="In Ref. 3; BAB68503." evidence="8" ref="3">
    <original>V</original>
    <variation>A</variation>
    <location>
        <position position="127"/>
    </location>
</feature>